<organism>
    <name type="scientific">Gallus gallus</name>
    <name type="common">Chicken</name>
    <dbReference type="NCBI Taxonomy" id="9031"/>
    <lineage>
        <taxon>Eukaryota</taxon>
        <taxon>Metazoa</taxon>
        <taxon>Chordata</taxon>
        <taxon>Craniata</taxon>
        <taxon>Vertebrata</taxon>
        <taxon>Euteleostomi</taxon>
        <taxon>Archelosauria</taxon>
        <taxon>Archosauria</taxon>
        <taxon>Dinosauria</taxon>
        <taxon>Saurischia</taxon>
        <taxon>Theropoda</taxon>
        <taxon>Coelurosauria</taxon>
        <taxon>Aves</taxon>
        <taxon>Neognathae</taxon>
        <taxon>Galloanserae</taxon>
        <taxon>Galliformes</taxon>
        <taxon>Phasianidae</taxon>
        <taxon>Phasianinae</taxon>
        <taxon>Gallus</taxon>
    </lineage>
</organism>
<protein>
    <recommendedName>
        <fullName>P2Y purinoceptor 8</fullName>
        <shortName>P2Y8</shortName>
    </recommendedName>
</protein>
<sequence>MVKNGSHLDAETLAMLQNKAISITLPVVYTMVAIISIPGNFFSLWVLCWHIKPKTPSVIFMINLSITDLLLACCFPFQIFYHIQRNHWIFGKTLCSLVTVMFYSNMYSSILTMTCISIERYMGVVYPMKLIKWRRKRYALGACVIMWIFLLLAFYPLESTDLTYEVKELGIITCFDVLKWEMLPNFAAWVAFLLTLFVVLFLIPFIVTVGCYIGTIRKLIQTSSRYGNKQKTRSIYLAIIVLSVFITCFAPNNFILLAHMIVRLFYEGSLYPAYKLTLCLSCLNNCIDPFIYYFASKEFYQKFMQVFRPKVPLSDSLETRRESLFSGRTMSVRSMSSGPMDGLEGVKICLQRQESVF</sequence>
<name>P2RY8_CHICK</name>
<accession>Q5ZI82</accession>
<gene>
    <name type="primary">P2RY8</name>
    <name type="ORF">RCJMB04_29g19</name>
</gene>
<proteinExistence type="evidence at transcript level"/>
<comment type="function">
    <text>Probable receptor for purines coupled to G-proteins.</text>
</comment>
<comment type="subcellular location">
    <subcellularLocation>
        <location>Cell membrane</location>
        <topology>Multi-pass membrane protein</topology>
    </subcellularLocation>
</comment>
<comment type="similarity">
    <text evidence="2">Belongs to the G-protein coupled receptor 1 family.</text>
</comment>
<feature type="chain" id="PRO_0000070032" description="P2Y purinoceptor 8">
    <location>
        <begin position="1"/>
        <end position="357"/>
    </location>
</feature>
<feature type="topological domain" description="Extracellular" evidence="1">
    <location>
        <begin position="1"/>
        <end position="26"/>
    </location>
</feature>
<feature type="transmembrane region" description="Helical; Name=1" evidence="1">
    <location>
        <begin position="27"/>
        <end position="47"/>
    </location>
</feature>
<feature type="topological domain" description="Cytoplasmic" evidence="1">
    <location>
        <begin position="48"/>
        <end position="56"/>
    </location>
</feature>
<feature type="transmembrane region" description="Helical; Name=2" evidence="1">
    <location>
        <begin position="57"/>
        <end position="77"/>
    </location>
</feature>
<feature type="topological domain" description="Extracellular" evidence="1">
    <location>
        <begin position="78"/>
        <end position="97"/>
    </location>
</feature>
<feature type="transmembrane region" description="Helical; Name=3" evidence="1">
    <location>
        <begin position="98"/>
        <end position="118"/>
    </location>
</feature>
<feature type="topological domain" description="Cytoplasmic" evidence="1">
    <location>
        <begin position="119"/>
        <end position="137"/>
    </location>
</feature>
<feature type="transmembrane region" description="Helical; Name=4" evidence="1">
    <location>
        <begin position="138"/>
        <end position="158"/>
    </location>
</feature>
<feature type="topological domain" description="Extracellular" evidence="1">
    <location>
        <begin position="159"/>
        <end position="185"/>
    </location>
</feature>
<feature type="transmembrane region" description="Helical; Name=5" evidence="1">
    <location>
        <begin position="186"/>
        <end position="206"/>
    </location>
</feature>
<feature type="topological domain" description="Cytoplasmic" evidence="1">
    <location>
        <begin position="207"/>
        <end position="236"/>
    </location>
</feature>
<feature type="transmembrane region" description="Helical; Name=6" evidence="1">
    <location>
        <begin position="237"/>
        <end position="257"/>
    </location>
</feature>
<feature type="topological domain" description="Extracellular" evidence="1">
    <location>
        <begin position="258"/>
        <end position="271"/>
    </location>
</feature>
<feature type="transmembrane region" description="Helical; Name=7" evidence="1">
    <location>
        <begin position="272"/>
        <end position="294"/>
    </location>
</feature>
<feature type="topological domain" description="Cytoplasmic" evidence="1">
    <location>
        <begin position="295"/>
        <end position="357"/>
    </location>
</feature>
<feature type="glycosylation site" description="N-linked (GlcNAc...) asparagine" evidence="1">
    <location>
        <position position="4"/>
    </location>
</feature>
<feature type="disulfide bond" evidence="2">
    <location>
        <begin position="95"/>
        <end position="174"/>
    </location>
</feature>
<dbReference type="EMBL" id="AJ720902">
    <property type="protein sequence ID" value="CAG32561.1"/>
    <property type="molecule type" value="mRNA"/>
</dbReference>
<dbReference type="RefSeq" id="NP_001008679.1">
    <property type="nucleotide sequence ID" value="NM_001008679.2"/>
</dbReference>
<dbReference type="RefSeq" id="XP_015133183.1">
    <property type="nucleotide sequence ID" value="XM_015277697.4"/>
</dbReference>
<dbReference type="RefSeq" id="XP_015133184.1">
    <property type="nucleotide sequence ID" value="XM_015277698.4"/>
</dbReference>
<dbReference type="RefSeq" id="XP_015133185.1">
    <property type="nucleotide sequence ID" value="XM_015277699.4"/>
</dbReference>
<dbReference type="RefSeq" id="XP_025005673.1">
    <property type="nucleotide sequence ID" value="XM_025149905.3"/>
</dbReference>
<dbReference type="RefSeq" id="XP_046763982.1">
    <property type="nucleotide sequence ID" value="XM_046908026.1"/>
</dbReference>
<dbReference type="RefSeq" id="XP_046763984.1">
    <property type="nucleotide sequence ID" value="XM_046908028.1"/>
</dbReference>
<dbReference type="RefSeq" id="XP_046763985.1">
    <property type="nucleotide sequence ID" value="XM_046908029.1"/>
</dbReference>
<dbReference type="RefSeq" id="XP_046763986.1">
    <property type="nucleotide sequence ID" value="XM_046908030.1"/>
</dbReference>
<dbReference type="RefSeq" id="XP_046763987.1">
    <property type="nucleotide sequence ID" value="XM_046908031.1"/>
</dbReference>
<dbReference type="RefSeq" id="XP_046796804.1">
    <property type="nucleotide sequence ID" value="XM_046940848.1"/>
</dbReference>
<dbReference type="SMR" id="Q5ZI82"/>
<dbReference type="FunCoup" id="Q5ZI82">
    <property type="interactions" value="143"/>
</dbReference>
<dbReference type="STRING" id="9031.ENSGALP00000070298"/>
<dbReference type="GlyCosmos" id="Q5ZI82">
    <property type="glycosylation" value="1 site, No reported glycans"/>
</dbReference>
<dbReference type="GlyGen" id="Q5ZI82">
    <property type="glycosylation" value="1 site"/>
</dbReference>
<dbReference type="PaxDb" id="9031-ENSGALP00000026875"/>
<dbReference type="Ensembl" id="ENSGALT00010004066.1">
    <property type="protein sequence ID" value="ENSGALP00010002363.1"/>
    <property type="gene ID" value="ENSGALG00010001786.1"/>
</dbReference>
<dbReference type="Ensembl" id="ENSGALT00010004067.1">
    <property type="protein sequence ID" value="ENSGALP00010002364.1"/>
    <property type="gene ID" value="ENSGALG00010001786.1"/>
</dbReference>
<dbReference type="Ensembl" id="ENSGALT00010004068.1">
    <property type="protein sequence ID" value="ENSGALP00010002365.1"/>
    <property type="gene ID" value="ENSGALG00010001786.1"/>
</dbReference>
<dbReference type="Ensembl" id="ENSGALT00010004071.1">
    <property type="protein sequence ID" value="ENSGALP00010002368.1"/>
    <property type="gene ID" value="ENSGALG00010001786.1"/>
</dbReference>
<dbReference type="Ensembl" id="ENSGALT00010004072.1">
    <property type="protein sequence ID" value="ENSGALP00010002369.1"/>
    <property type="gene ID" value="ENSGALG00010001786.1"/>
</dbReference>
<dbReference type="Ensembl" id="ENSGALT00010004073.1">
    <property type="protein sequence ID" value="ENSGALP00010002370.1"/>
    <property type="gene ID" value="ENSGALG00010001786.1"/>
</dbReference>
<dbReference type="Ensembl" id="ENSGALT00010004074.1">
    <property type="protein sequence ID" value="ENSGALP00010002371.1"/>
    <property type="gene ID" value="ENSGALG00010001786.1"/>
</dbReference>
<dbReference type="Ensembl" id="ENSGALT00010004075.1">
    <property type="protein sequence ID" value="ENSGALP00010002372.1"/>
    <property type="gene ID" value="ENSGALG00010001786.1"/>
</dbReference>
<dbReference type="Ensembl" id="ENSGALT00010004076.1">
    <property type="protein sequence ID" value="ENSGALP00010002373.1"/>
    <property type="gene ID" value="ENSGALG00010001786.1"/>
</dbReference>
<dbReference type="Ensembl" id="ENSGALT00010004077.1">
    <property type="protein sequence ID" value="ENSGALP00010002374.1"/>
    <property type="gene ID" value="ENSGALG00010001786.1"/>
</dbReference>
<dbReference type="GeneID" id="418665"/>
<dbReference type="KEGG" id="gga:418665"/>
<dbReference type="CTD" id="286530"/>
<dbReference type="VEuPathDB" id="HostDB:geneid_418665"/>
<dbReference type="eggNOG" id="ENOG502QW5Q">
    <property type="taxonomic scope" value="Eukaryota"/>
</dbReference>
<dbReference type="GeneTree" id="ENSGT01050000244840"/>
<dbReference type="HOGENOM" id="CLU_009579_8_2_1"/>
<dbReference type="InParanoid" id="Q5ZI82"/>
<dbReference type="OMA" id="CVTTFCY"/>
<dbReference type="OrthoDB" id="9944627at2759"/>
<dbReference type="PhylomeDB" id="Q5ZI82"/>
<dbReference type="TreeFam" id="TF330775"/>
<dbReference type="PRO" id="PR:Q5ZI82"/>
<dbReference type="Proteomes" id="UP000000539">
    <property type="component" value="Chromosome 1"/>
</dbReference>
<dbReference type="Bgee" id="ENSGALG00000016687">
    <property type="expression patterns" value="Expressed in spleen and 11 other cell types or tissues"/>
</dbReference>
<dbReference type="GO" id="GO:0005886">
    <property type="term" value="C:plasma membrane"/>
    <property type="evidence" value="ECO:0000318"/>
    <property type="project" value="GO_Central"/>
</dbReference>
<dbReference type="GO" id="GO:0045028">
    <property type="term" value="F:G protein-coupled purinergic nucleotide receptor activity"/>
    <property type="evidence" value="ECO:0007669"/>
    <property type="project" value="InterPro"/>
</dbReference>
<dbReference type="GO" id="GO:0004930">
    <property type="term" value="F:G protein-coupled receptor activity"/>
    <property type="evidence" value="ECO:0000318"/>
    <property type="project" value="GO_Central"/>
</dbReference>
<dbReference type="GO" id="GO:0015057">
    <property type="term" value="F:thrombin-activated receptor activity"/>
    <property type="evidence" value="ECO:0007669"/>
    <property type="project" value="InterPro"/>
</dbReference>
<dbReference type="GO" id="GO:0007596">
    <property type="term" value="P:blood coagulation"/>
    <property type="evidence" value="ECO:0007669"/>
    <property type="project" value="InterPro"/>
</dbReference>
<dbReference type="GO" id="GO:0007186">
    <property type="term" value="P:G protein-coupled receptor signaling pathway"/>
    <property type="evidence" value="ECO:0000318"/>
    <property type="project" value="GO_Central"/>
</dbReference>
<dbReference type="GO" id="GO:0160221">
    <property type="term" value="P:Rho-activating G protein-coupled receptor signaling pathway"/>
    <property type="evidence" value="ECO:0007669"/>
    <property type="project" value="Ensembl"/>
</dbReference>
<dbReference type="CDD" id="cd15368">
    <property type="entry name" value="7tmA_P2Y8"/>
    <property type="match status" value="1"/>
</dbReference>
<dbReference type="FunFam" id="1.20.1070.10:FF:000040">
    <property type="entry name" value="Coagulation factor 2 (thrombin) receptor"/>
    <property type="match status" value="1"/>
</dbReference>
<dbReference type="Gene3D" id="1.20.1070.10">
    <property type="entry name" value="Rhodopsin 7-helix transmembrane proteins"/>
    <property type="match status" value="1"/>
</dbReference>
<dbReference type="InterPro" id="IPR000276">
    <property type="entry name" value="GPCR_Rhodpsn"/>
</dbReference>
<dbReference type="InterPro" id="IPR017452">
    <property type="entry name" value="GPCR_Rhodpsn_7TM"/>
</dbReference>
<dbReference type="InterPro" id="IPR027669">
    <property type="entry name" value="P2Y8_rcpt"/>
</dbReference>
<dbReference type="InterPro" id="IPR003912">
    <property type="entry name" value="Protea_act_rcpt"/>
</dbReference>
<dbReference type="PANTHER" id="PTHR24232">
    <property type="entry name" value="G-PROTEIN COUPLED RECEPTOR"/>
    <property type="match status" value="1"/>
</dbReference>
<dbReference type="PANTHER" id="PTHR24232:SF25">
    <property type="entry name" value="P2Y PURINOCEPTOR 8"/>
    <property type="match status" value="1"/>
</dbReference>
<dbReference type="Pfam" id="PF00001">
    <property type="entry name" value="7tm_1"/>
    <property type="match status" value="1"/>
</dbReference>
<dbReference type="PRINTS" id="PR00237">
    <property type="entry name" value="GPCRRHODOPSN"/>
</dbReference>
<dbReference type="PRINTS" id="PR01428">
    <property type="entry name" value="PROTEASEAR"/>
</dbReference>
<dbReference type="SUPFAM" id="SSF81321">
    <property type="entry name" value="Family A G protein-coupled receptor-like"/>
    <property type="match status" value="1"/>
</dbReference>
<dbReference type="PROSITE" id="PS00237">
    <property type="entry name" value="G_PROTEIN_RECEP_F1_1"/>
    <property type="match status" value="1"/>
</dbReference>
<dbReference type="PROSITE" id="PS50262">
    <property type="entry name" value="G_PROTEIN_RECEP_F1_2"/>
    <property type="match status" value="1"/>
</dbReference>
<evidence type="ECO:0000255" key="1"/>
<evidence type="ECO:0000255" key="2">
    <source>
        <dbReference type="PROSITE-ProRule" id="PRU00521"/>
    </source>
</evidence>
<keyword id="KW-1003">Cell membrane</keyword>
<keyword id="KW-1015">Disulfide bond</keyword>
<keyword id="KW-0297">G-protein coupled receptor</keyword>
<keyword id="KW-0325">Glycoprotein</keyword>
<keyword id="KW-0472">Membrane</keyword>
<keyword id="KW-0675">Receptor</keyword>
<keyword id="KW-1185">Reference proteome</keyword>
<keyword id="KW-0807">Transducer</keyword>
<keyword id="KW-0812">Transmembrane</keyword>
<keyword id="KW-1133">Transmembrane helix</keyword>
<reference key="1">
    <citation type="journal article" date="2005" name="Genome Biol.">
        <title>Full-length cDNAs from chicken bursal lymphocytes to facilitate gene function analysis.</title>
        <authorList>
            <person name="Caldwell R.B."/>
            <person name="Kierzek A.M."/>
            <person name="Arakawa H."/>
            <person name="Bezzubov Y."/>
            <person name="Zaim J."/>
            <person name="Fiedler P."/>
            <person name="Kutter S."/>
            <person name="Blagodatski A."/>
            <person name="Kostovska D."/>
            <person name="Koter M."/>
            <person name="Plachy J."/>
            <person name="Carninci P."/>
            <person name="Hayashizaki Y."/>
            <person name="Buerstedde J.-M."/>
        </authorList>
    </citation>
    <scope>NUCLEOTIDE SEQUENCE [LARGE SCALE MRNA]</scope>
    <source>
        <strain>CB</strain>
        <tissue>Bursa of Fabricius</tissue>
    </source>
</reference>